<proteinExistence type="inferred from homology"/>
<gene>
    <name type="ordered locus">BCG_2919c</name>
</gene>
<organism>
    <name type="scientific">Mycobacterium bovis (strain BCG / Pasteur 1173P2)</name>
    <dbReference type="NCBI Taxonomy" id="410289"/>
    <lineage>
        <taxon>Bacteria</taxon>
        <taxon>Bacillati</taxon>
        <taxon>Actinomycetota</taxon>
        <taxon>Actinomycetes</taxon>
        <taxon>Mycobacteriales</taxon>
        <taxon>Mycobacteriaceae</taxon>
        <taxon>Mycobacterium</taxon>
        <taxon>Mycobacterium tuberculosis complex</taxon>
    </lineage>
</organism>
<feature type="chain" id="PRO_1000009234" description="UPF0102 protein BCG_2919c">
    <location>
        <begin position="1"/>
        <end position="128"/>
    </location>
</feature>
<comment type="similarity">
    <text evidence="1">Belongs to the UPF0102 family.</text>
</comment>
<name>Y2919_MYCBP</name>
<dbReference type="EMBL" id="AM408590">
    <property type="protein sequence ID" value="CAL72908.1"/>
    <property type="molecule type" value="Genomic_DNA"/>
</dbReference>
<dbReference type="RefSeq" id="WP_003414702.1">
    <property type="nucleotide sequence ID" value="NC_008769.1"/>
</dbReference>
<dbReference type="SMR" id="A1KMP2"/>
<dbReference type="KEGG" id="mbb:BCG_2919c"/>
<dbReference type="HOGENOM" id="CLU_115353_2_3_11"/>
<dbReference type="Proteomes" id="UP000001472">
    <property type="component" value="Chromosome"/>
</dbReference>
<dbReference type="GO" id="GO:0003676">
    <property type="term" value="F:nucleic acid binding"/>
    <property type="evidence" value="ECO:0007669"/>
    <property type="project" value="InterPro"/>
</dbReference>
<dbReference type="CDD" id="cd20736">
    <property type="entry name" value="PoNe_Nuclease"/>
    <property type="match status" value="1"/>
</dbReference>
<dbReference type="Gene3D" id="3.40.1350.10">
    <property type="match status" value="1"/>
</dbReference>
<dbReference type="HAMAP" id="MF_00048">
    <property type="entry name" value="UPF0102"/>
    <property type="match status" value="1"/>
</dbReference>
<dbReference type="InterPro" id="IPR011335">
    <property type="entry name" value="Restrct_endonuc-II-like"/>
</dbReference>
<dbReference type="InterPro" id="IPR011856">
    <property type="entry name" value="tRNA_endonuc-like_dom_sf"/>
</dbReference>
<dbReference type="InterPro" id="IPR003509">
    <property type="entry name" value="UPF0102_YraN-like"/>
</dbReference>
<dbReference type="NCBIfam" id="NF009150">
    <property type="entry name" value="PRK12497.1-3"/>
    <property type="match status" value="1"/>
</dbReference>
<dbReference type="NCBIfam" id="NF009153">
    <property type="entry name" value="PRK12497.3-1"/>
    <property type="match status" value="1"/>
</dbReference>
<dbReference type="NCBIfam" id="NF009154">
    <property type="entry name" value="PRK12497.3-3"/>
    <property type="match status" value="1"/>
</dbReference>
<dbReference type="NCBIfam" id="TIGR00252">
    <property type="entry name" value="YraN family protein"/>
    <property type="match status" value="1"/>
</dbReference>
<dbReference type="PANTHER" id="PTHR34039">
    <property type="entry name" value="UPF0102 PROTEIN YRAN"/>
    <property type="match status" value="1"/>
</dbReference>
<dbReference type="PANTHER" id="PTHR34039:SF1">
    <property type="entry name" value="UPF0102 PROTEIN YRAN"/>
    <property type="match status" value="1"/>
</dbReference>
<dbReference type="Pfam" id="PF02021">
    <property type="entry name" value="UPF0102"/>
    <property type="match status" value="1"/>
</dbReference>
<dbReference type="SUPFAM" id="SSF52980">
    <property type="entry name" value="Restriction endonuclease-like"/>
    <property type="match status" value="1"/>
</dbReference>
<reference key="1">
    <citation type="journal article" date="2007" name="Proc. Natl. Acad. Sci. U.S.A.">
        <title>Genome plasticity of BCG and impact on vaccine efficacy.</title>
        <authorList>
            <person name="Brosch R."/>
            <person name="Gordon S.V."/>
            <person name="Garnier T."/>
            <person name="Eiglmeier K."/>
            <person name="Frigui W."/>
            <person name="Valenti P."/>
            <person name="Dos Santos S."/>
            <person name="Duthoy S."/>
            <person name="Lacroix C."/>
            <person name="Garcia-Pelayo C."/>
            <person name="Inwald J.K."/>
            <person name="Golby P."/>
            <person name="Garcia J.N."/>
            <person name="Hewinson R.G."/>
            <person name="Behr M.A."/>
            <person name="Quail M.A."/>
            <person name="Churcher C."/>
            <person name="Barrell B.G."/>
            <person name="Parkhill J."/>
            <person name="Cole S.T."/>
        </authorList>
    </citation>
    <scope>NUCLEOTIDE SEQUENCE [LARGE SCALE GENOMIC DNA]</scope>
    <source>
        <strain>BCG / Pasteur 1173P2</strain>
    </source>
</reference>
<sequence>MTTLKTMTRVQLGAMGEALAVDYLTSMGLRILNRNWRCRYGELDVIACDAATRTVVFVEVKTRTGDGYGGLAHAVTERKVRRLRRLAGLWLADQEERWAAVRIDVIGVRVGPKNSGRTPELTHLQGIG</sequence>
<evidence type="ECO:0000255" key="1">
    <source>
        <dbReference type="HAMAP-Rule" id="MF_00048"/>
    </source>
</evidence>
<accession>A1KMP2</accession>
<protein>
    <recommendedName>
        <fullName evidence="1">UPF0102 protein BCG_2919c</fullName>
    </recommendedName>
</protein>